<reference key="1">
    <citation type="journal article" date="1986" name="Eur. J. Biochem.">
        <title>Complete amino acid sequence of plastocyanin from a green alga, Enteromorpha prolifera.</title>
        <authorList>
            <person name="Simpson R.J."/>
            <person name="Moritz R.L."/>
            <person name="Nice E.C."/>
            <person name="Grego B."/>
            <person name="Yoshizaki F."/>
            <person name="Sugimura Y."/>
            <person name="Freeman H.C."/>
            <person name="Murata M."/>
        </authorList>
    </citation>
    <scope>PROTEIN SEQUENCE</scope>
    <scope>SUBCELLULAR LOCATION</scope>
</reference>
<reference key="2">
    <citation type="journal article" date="1990" name="J. Mol. Biol.">
        <title>Crystal structure of plastocyanin from a green alga, Enteromorpha prolifera.</title>
        <authorList>
            <person name="Collyer C.A."/>
            <person name="Guss J.M."/>
            <person name="Sugimura Y."/>
            <person name="Yoshizaki F."/>
            <person name="Freeman H.C."/>
        </authorList>
    </citation>
    <scope>X-RAY CRYSTALLOGRAPHY (1.80 ANGSTROMS) IN COMPLEX WITH COPPER</scope>
    <scope>FUNCTION</scope>
    <scope>COFACTOR</scope>
    <scope>SUBCELLULAR LOCATION</scope>
</reference>
<comment type="function">
    <text evidence="1">Participates in electron transfer between P700 and the cytochrome b6-f complex in photosystem I.</text>
</comment>
<comment type="cofactor">
    <cofactor evidence="1">
        <name>Cu(2+)</name>
        <dbReference type="ChEBI" id="CHEBI:29036"/>
    </cofactor>
</comment>
<comment type="subcellular location">
    <subcellularLocation>
        <location evidence="1 2">Plastid</location>
        <location evidence="1 2">Chloroplast thylakoid membrane</location>
        <topology evidence="1">Peripheral membrane protein</topology>
        <orientation evidence="1">Lumenal side</orientation>
    </subcellularLocation>
    <text>Loosely bound to the inner thylakoid membrane surface in chloroplasts (PubMed:2308169).</text>
</comment>
<comment type="similarity">
    <text evidence="3">Belongs to the plastocyanin family.</text>
</comment>
<keyword id="KW-0002">3D-structure</keyword>
<keyword id="KW-0150">Chloroplast</keyword>
<keyword id="KW-0186">Copper</keyword>
<keyword id="KW-0903">Direct protein sequencing</keyword>
<keyword id="KW-0249">Electron transport</keyword>
<keyword id="KW-0472">Membrane</keyword>
<keyword id="KW-0479">Metal-binding</keyword>
<keyword id="KW-0934">Plastid</keyword>
<keyword id="KW-0793">Thylakoid</keyword>
<keyword id="KW-0813">Transport</keyword>
<accession>P07465</accession>
<proteinExistence type="evidence at protein level"/>
<name>PLAS_ULVPR</name>
<dbReference type="PIR" id="A25055">
    <property type="entry name" value="CUEI"/>
</dbReference>
<dbReference type="PDB" id="7PCY">
    <property type="method" value="X-ray"/>
    <property type="resolution" value="1.80 A"/>
    <property type="chains" value="A=1-98"/>
</dbReference>
<dbReference type="PDBsum" id="7PCY"/>
<dbReference type="SMR" id="P07465"/>
<dbReference type="EvolutionaryTrace" id="P07465"/>
<dbReference type="GO" id="GO:0009543">
    <property type="term" value="C:chloroplast thylakoid lumen"/>
    <property type="evidence" value="ECO:0007669"/>
    <property type="project" value="TreeGrafter"/>
</dbReference>
<dbReference type="GO" id="GO:0009535">
    <property type="term" value="C:chloroplast thylakoid membrane"/>
    <property type="evidence" value="ECO:0007669"/>
    <property type="project" value="UniProtKB-SubCell"/>
</dbReference>
<dbReference type="GO" id="GO:0005507">
    <property type="term" value="F:copper ion binding"/>
    <property type="evidence" value="ECO:0007669"/>
    <property type="project" value="InterPro"/>
</dbReference>
<dbReference type="GO" id="GO:0046028">
    <property type="term" value="F:electron transporter, transferring electrons from cytochrome b6/f complex of photosystem II activity"/>
    <property type="evidence" value="ECO:0007669"/>
    <property type="project" value="TreeGrafter"/>
</dbReference>
<dbReference type="CDD" id="cd04219">
    <property type="entry name" value="Plastocyanin"/>
    <property type="match status" value="1"/>
</dbReference>
<dbReference type="Gene3D" id="2.60.40.420">
    <property type="entry name" value="Cupredoxins - blue copper proteins"/>
    <property type="match status" value="1"/>
</dbReference>
<dbReference type="InterPro" id="IPR000923">
    <property type="entry name" value="BlueCu_1"/>
</dbReference>
<dbReference type="InterPro" id="IPR028871">
    <property type="entry name" value="BlueCu_1_BS"/>
</dbReference>
<dbReference type="InterPro" id="IPR001235">
    <property type="entry name" value="Copper_blue_Plastocyanin"/>
</dbReference>
<dbReference type="InterPro" id="IPR008972">
    <property type="entry name" value="Cupredoxin"/>
</dbReference>
<dbReference type="InterPro" id="IPR002387">
    <property type="entry name" value="Plastocyanin"/>
</dbReference>
<dbReference type="NCBIfam" id="TIGR02656">
    <property type="entry name" value="cyanin_plasto"/>
    <property type="match status" value="1"/>
</dbReference>
<dbReference type="PANTHER" id="PTHR34192">
    <property type="entry name" value="PLASTOCYANIN MAJOR ISOFORM, CHLOROPLASTIC-RELATED"/>
    <property type="match status" value="1"/>
</dbReference>
<dbReference type="PANTHER" id="PTHR34192:SF10">
    <property type="entry name" value="PLASTOCYANIN MAJOR ISOFORM, CHLOROPLASTIC-RELATED"/>
    <property type="match status" value="1"/>
</dbReference>
<dbReference type="Pfam" id="PF00127">
    <property type="entry name" value="Copper-bind"/>
    <property type="match status" value="1"/>
</dbReference>
<dbReference type="PRINTS" id="PR00156">
    <property type="entry name" value="COPPERBLUE"/>
</dbReference>
<dbReference type="PRINTS" id="PR00157">
    <property type="entry name" value="PLASTOCYANIN"/>
</dbReference>
<dbReference type="SUPFAM" id="SSF49503">
    <property type="entry name" value="Cupredoxins"/>
    <property type="match status" value="1"/>
</dbReference>
<dbReference type="PROSITE" id="PS00196">
    <property type="entry name" value="COPPER_BLUE"/>
    <property type="match status" value="1"/>
</dbReference>
<sequence>AAIVKLGGDDGSLAFVPNNITVGAGESIEFINNAGFPHNIVFDEDAVPAGVDADAISAEDYLNSKGQTVVRKLTTPGTYGVYCDPHSGAGMKMTITVQ</sequence>
<evidence type="ECO:0000269" key="1">
    <source>
    </source>
</evidence>
<evidence type="ECO:0000269" key="2">
    <source>
    </source>
</evidence>
<evidence type="ECO:0000305" key="3"/>
<evidence type="ECO:0007829" key="4">
    <source>
        <dbReference type="PDB" id="7PCY"/>
    </source>
</evidence>
<feature type="chain" id="PRO_0000085566" description="Plastocyanin">
    <location>
        <begin position="1"/>
        <end position="98"/>
    </location>
</feature>
<feature type="domain" description="Plastocyanin-like">
    <location>
        <begin position="1"/>
        <end position="98"/>
    </location>
</feature>
<feature type="binding site" evidence="1">
    <location>
        <position position="38"/>
    </location>
    <ligand>
        <name>Cu cation</name>
        <dbReference type="ChEBI" id="CHEBI:23378"/>
    </ligand>
</feature>
<feature type="binding site" evidence="1">
    <location>
        <position position="83"/>
    </location>
    <ligand>
        <name>Cu cation</name>
        <dbReference type="ChEBI" id="CHEBI:23378"/>
    </ligand>
</feature>
<feature type="binding site" evidence="1">
    <location>
        <position position="86"/>
    </location>
    <ligand>
        <name>Cu cation</name>
        <dbReference type="ChEBI" id="CHEBI:23378"/>
    </ligand>
</feature>
<feature type="binding site" evidence="1">
    <location>
        <position position="91"/>
    </location>
    <ligand>
        <name>Cu cation</name>
        <dbReference type="ChEBI" id="CHEBI:23378"/>
    </ligand>
</feature>
<feature type="strand" evidence="4">
    <location>
        <begin position="2"/>
        <end position="7"/>
    </location>
</feature>
<feature type="strand" evidence="4">
    <location>
        <begin position="13"/>
        <end position="23"/>
    </location>
</feature>
<feature type="strand" evidence="4">
    <location>
        <begin position="27"/>
        <end position="32"/>
    </location>
</feature>
<feature type="strand" evidence="4">
    <location>
        <begin position="34"/>
        <end position="36"/>
    </location>
</feature>
<feature type="strand" evidence="4">
    <location>
        <begin position="38"/>
        <end position="42"/>
    </location>
</feature>
<feature type="helix" evidence="4">
    <location>
        <begin position="53"/>
        <end position="56"/>
    </location>
</feature>
<feature type="strand" evidence="4">
    <location>
        <begin position="58"/>
        <end position="62"/>
    </location>
</feature>
<feature type="strand" evidence="4">
    <location>
        <begin position="68"/>
        <end position="72"/>
    </location>
</feature>
<feature type="strand" evidence="4">
    <location>
        <begin position="77"/>
        <end position="82"/>
    </location>
</feature>
<feature type="helix" evidence="4">
    <location>
        <begin position="87"/>
        <end position="89"/>
    </location>
</feature>
<feature type="strand" evidence="4">
    <location>
        <begin position="92"/>
        <end position="98"/>
    </location>
</feature>
<protein>
    <recommendedName>
        <fullName>Plastocyanin</fullName>
    </recommendedName>
</protein>
<organism>
    <name type="scientific">Ulva prolifera</name>
    <name type="common">Green seaweed</name>
    <name type="synonym">Enteromorpha prolifera</name>
    <dbReference type="NCBI Taxonomy" id="3117"/>
    <lineage>
        <taxon>Eukaryota</taxon>
        <taxon>Viridiplantae</taxon>
        <taxon>Chlorophyta</taxon>
        <taxon>Ulvophyceae</taxon>
        <taxon>OUU clade</taxon>
        <taxon>Ulvales</taxon>
        <taxon>Ulvaceae</taxon>
        <taxon>Ulva</taxon>
    </lineage>
</organism>
<gene>
    <name type="primary">PETE</name>
</gene>